<evidence type="ECO:0000255" key="1">
    <source>
        <dbReference type="HAMAP-Rule" id="MF_00019"/>
    </source>
</evidence>
<gene>
    <name evidence="1" type="primary">plsX</name>
    <name type="ordered locus">Dred_2076</name>
</gene>
<proteinExistence type="inferred from homology"/>
<sequence length="333" mass="35144">MIKIALDAMGGDHAPMEIIRGARDAAQELGVHILLVGDQEKIQKELDGDEAGGLISIVHAPEVVGMEEHPVSAIRKKKNSSIVVATQLVKEGVADAVVSAGSTGAQMASSLFILGRISGVDRPAISTLLPTAKGVVVLLDAGANVDCRPKHLKQFAVMGSLYAERVLGLPSPKVGLVNIGAEETKGNELTIASYQMLQKTSINFVGNVEGRDLFLGGSDVAVCDGFVGNVILKSAEGLAMSILGMFKQELGRLEDIIGNERIMHMLGSFKRRMDYAEYGGAPLLGVNGVSVICHGSSRARAIKNALRVAKETVEQGLVPAIKESLENDKGVEE</sequence>
<organism>
    <name type="scientific">Desulforamulus reducens (strain ATCC BAA-1160 / DSM 100696 / MI-1)</name>
    <name type="common">Desulfotomaculum reducens</name>
    <dbReference type="NCBI Taxonomy" id="349161"/>
    <lineage>
        <taxon>Bacteria</taxon>
        <taxon>Bacillati</taxon>
        <taxon>Bacillota</taxon>
        <taxon>Clostridia</taxon>
        <taxon>Eubacteriales</taxon>
        <taxon>Peptococcaceae</taxon>
        <taxon>Desulforamulus</taxon>
    </lineage>
</organism>
<feature type="chain" id="PRO_0000329221" description="Phosphate acyltransferase">
    <location>
        <begin position="1"/>
        <end position="333"/>
    </location>
</feature>
<accession>A4J690</accession>
<protein>
    <recommendedName>
        <fullName evidence="1">Phosphate acyltransferase</fullName>
        <ecNumber evidence="1">2.3.1.274</ecNumber>
    </recommendedName>
    <alternativeName>
        <fullName evidence="1">Acyl-ACP phosphotransacylase</fullName>
    </alternativeName>
    <alternativeName>
        <fullName evidence="1">Acyl-[acyl-carrier-protein]--phosphate acyltransferase</fullName>
    </alternativeName>
    <alternativeName>
        <fullName evidence="1">Phosphate-acyl-ACP acyltransferase</fullName>
    </alternativeName>
</protein>
<name>PLSX_DESRM</name>
<reference key="1">
    <citation type="submission" date="2007-03" db="EMBL/GenBank/DDBJ databases">
        <title>Complete sequence of Desulfotomaculum reducens MI-1.</title>
        <authorList>
            <consortium name="US DOE Joint Genome Institute"/>
            <person name="Copeland A."/>
            <person name="Lucas S."/>
            <person name="Lapidus A."/>
            <person name="Barry K."/>
            <person name="Detter J.C."/>
            <person name="Glavina del Rio T."/>
            <person name="Hammon N."/>
            <person name="Israni S."/>
            <person name="Dalin E."/>
            <person name="Tice H."/>
            <person name="Pitluck S."/>
            <person name="Sims D."/>
            <person name="Brettin T."/>
            <person name="Bruce D."/>
            <person name="Han C."/>
            <person name="Tapia R."/>
            <person name="Schmutz J."/>
            <person name="Larimer F."/>
            <person name="Land M."/>
            <person name="Hauser L."/>
            <person name="Kyrpides N."/>
            <person name="Kim E."/>
            <person name="Tebo B.M."/>
            <person name="Richardson P."/>
        </authorList>
    </citation>
    <scope>NUCLEOTIDE SEQUENCE [LARGE SCALE GENOMIC DNA]</scope>
    <source>
        <strain>ATCC BAA-1160 / DSM 100696 / MI-1</strain>
    </source>
</reference>
<dbReference type="EC" id="2.3.1.274" evidence="1"/>
<dbReference type="EMBL" id="CP000612">
    <property type="protein sequence ID" value="ABO50593.1"/>
    <property type="molecule type" value="Genomic_DNA"/>
</dbReference>
<dbReference type="SMR" id="A4J690"/>
<dbReference type="STRING" id="349161.Dred_2076"/>
<dbReference type="KEGG" id="drm:Dred_2076"/>
<dbReference type="eggNOG" id="COG0416">
    <property type="taxonomic scope" value="Bacteria"/>
</dbReference>
<dbReference type="HOGENOM" id="CLU_039379_1_1_9"/>
<dbReference type="UniPathway" id="UPA00085"/>
<dbReference type="Proteomes" id="UP000001556">
    <property type="component" value="Chromosome"/>
</dbReference>
<dbReference type="GO" id="GO:0005737">
    <property type="term" value="C:cytoplasm"/>
    <property type="evidence" value="ECO:0007669"/>
    <property type="project" value="UniProtKB-SubCell"/>
</dbReference>
<dbReference type="GO" id="GO:0043811">
    <property type="term" value="F:phosphate:acyl-[acyl carrier protein] acyltransferase activity"/>
    <property type="evidence" value="ECO:0007669"/>
    <property type="project" value="UniProtKB-UniRule"/>
</dbReference>
<dbReference type="GO" id="GO:0006633">
    <property type="term" value="P:fatty acid biosynthetic process"/>
    <property type="evidence" value="ECO:0007669"/>
    <property type="project" value="UniProtKB-UniRule"/>
</dbReference>
<dbReference type="GO" id="GO:0008654">
    <property type="term" value="P:phospholipid biosynthetic process"/>
    <property type="evidence" value="ECO:0007669"/>
    <property type="project" value="UniProtKB-KW"/>
</dbReference>
<dbReference type="Gene3D" id="3.40.718.10">
    <property type="entry name" value="Isopropylmalate Dehydrogenase"/>
    <property type="match status" value="1"/>
</dbReference>
<dbReference type="HAMAP" id="MF_00019">
    <property type="entry name" value="PlsX"/>
    <property type="match status" value="1"/>
</dbReference>
<dbReference type="InterPro" id="IPR003664">
    <property type="entry name" value="FA_synthesis"/>
</dbReference>
<dbReference type="InterPro" id="IPR012281">
    <property type="entry name" value="Phospholipid_synth_PlsX-like"/>
</dbReference>
<dbReference type="NCBIfam" id="TIGR00182">
    <property type="entry name" value="plsX"/>
    <property type="match status" value="1"/>
</dbReference>
<dbReference type="PANTHER" id="PTHR30100">
    <property type="entry name" value="FATTY ACID/PHOSPHOLIPID SYNTHESIS PROTEIN PLSX"/>
    <property type="match status" value="1"/>
</dbReference>
<dbReference type="PANTHER" id="PTHR30100:SF1">
    <property type="entry name" value="PHOSPHATE ACYLTRANSFERASE"/>
    <property type="match status" value="1"/>
</dbReference>
<dbReference type="Pfam" id="PF02504">
    <property type="entry name" value="FA_synthesis"/>
    <property type="match status" value="1"/>
</dbReference>
<dbReference type="PIRSF" id="PIRSF002465">
    <property type="entry name" value="Phsphlp_syn_PlsX"/>
    <property type="match status" value="1"/>
</dbReference>
<dbReference type="SUPFAM" id="SSF53659">
    <property type="entry name" value="Isocitrate/Isopropylmalate dehydrogenase-like"/>
    <property type="match status" value="1"/>
</dbReference>
<comment type="function">
    <text evidence="1">Catalyzes the reversible formation of acyl-phosphate (acyl-PO(4)) from acyl-[acyl-carrier-protein] (acyl-ACP). This enzyme utilizes acyl-ACP as fatty acyl donor, but not acyl-CoA.</text>
</comment>
<comment type="catalytic activity">
    <reaction evidence="1">
        <text>a fatty acyl-[ACP] + phosphate = an acyl phosphate + holo-[ACP]</text>
        <dbReference type="Rhea" id="RHEA:42292"/>
        <dbReference type="Rhea" id="RHEA-COMP:9685"/>
        <dbReference type="Rhea" id="RHEA-COMP:14125"/>
        <dbReference type="ChEBI" id="CHEBI:43474"/>
        <dbReference type="ChEBI" id="CHEBI:59918"/>
        <dbReference type="ChEBI" id="CHEBI:64479"/>
        <dbReference type="ChEBI" id="CHEBI:138651"/>
        <dbReference type="EC" id="2.3.1.274"/>
    </reaction>
</comment>
<comment type="pathway">
    <text evidence="1">Lipid metabolism; phospholipid metabolism.</text>
</comment>
<comment type="subunit">
    <text evidence="1">Homodimer. Probably interacts with PlsY.</text>
</comment>
<comment type="subcellular location">
    <subcellularLocation>
        <location evidence="1">Cytoplasm</location>
    </subcellularLocation>
    <text evidence="1">Associated with the membrane possibly through PlsY.</text>
</comment>
<comment type="similarity">
    <text evidence="1">Belongs to the PlsX family.</text>
</comment>
<keyword id="KW-0963">Cytoplasm</keyword>
<keyword id="KW-0444">Lipid biosynthesis</keyword>
<keyword id="KW-0443">Lipid metabolism</keyword>
<keyword id="KW-0594">Phospholipid biosynthesis</keyword>
<keyword id="KW-1208">Phospholipid metabolism</keyword>
<keyword id="KW-1185">Reference proteome</keyword>
<keyword id="KW-0808">Transferase</keyword>